<sequence>MSGLFGILSPAKRVNGDGLPLFYNIHKSVELQRCHRDTARVSVTLAELLMSVEDEGDDQSRAMDIAVASNFWSSVPSSRVPSSSPFVLSFKDLTYSVKIKKKFKPFPCCGNSPFDGNDMEMNTKVLLNGISGEAREGEMMAVLGASGSGKSTLIDALANRISKESLRGDITLNGEVLESSLHKVISAYVMQDDLLFPMLTVEETLMFSAEFRLPSSLSKKKKKARVQALIDQLGLRNAAKTVIGDEGHRGVSGGERRRVSIGTDIIHDPIILFLDEPTSGLDSTSAYMVVKVLQRIAQSGSIVIMSIHQPSYRILGLLDKLIFLSRGNTVYSGSPTHLPQFFSEFGHPIPENENKPEFALDLIRELEDSPEGTKSLVEFHKQWRAKQTSSQSRRNTNVSLKDAISASISRGKLVSGATNLRSSFQTFANPFWTEMLVIGKRSILNSRRQPELFGIRLGAVLVTGMILATIFWKLDNSPRGIQERLGFFAFAMSTTFYTCAEAIPVFLQERYIFMRETAYNAYRRSSYVLAHTIISIPALIILSAAFAASTFSAVGLAGGSEGFLFFFFTILTAFWAGSSFVTFLSGVVSHVMIGFTVVVAILAYFLLFSGFFISRDRIPLYWIWFHYLSLVKYPYEGVLQNEFEDPTKCFVRGIQMFDNSPLGQVPTAVKISLLKSMSGVLGINVTAETCVTTGIDILKQQGITEISKWNCLWITVAWGFFFRVLFYFTLLIGSKNKRR</sequence>
<dbReference type="EMBL" id="AL132966">
    <property type="protein sequence ID" value="CAB67658.1"/>
    <property type="molecule type" value="Genomic_DNA"/>
</dbReference>
<dbReference type="EMBL" id="CP002686">
    <property type="protein sequence ID" value="AEE79099.1"/>
    <property type="molecule type" value="Genomic_DNA"/>
</dbReference>
<dbReference type="EMBL" id="AK228064">
    <property type="status" value="NOT_ANNOTATED_CDS"/>
    <property type="molecule type" value="mRNA"/>
</dbReference>
<dbReference type="PIR" id="T45891">
    <property type="entry name" value="T45891"/>
</dbReference>
<dbReference type="RefSeq" id="NP_190919.1">
    <property type="nucleotide sequence ID" value="NM_115211.5"/>
</dbReference>
<dbReference type="SMR" id="Q9LFG8"/>
<dbReference type="BioGRID" id="9836">
    <property type="interactions" value="60"/>
</dbReference>
<dbReference type="FunCoup" id="Q9LFG8">
    <property type="interactions" value="68"/>
</dbReference>
<dbReference type="IntAct" id="Q9LFG8">
    <property type="interactions" value="59"/>
</dbReference>
<dbReference type="STRING" id="3702.Q9LFG8"/>
<dbReference type="PaxDb" id="3702-AT3G53510.1"/>
<dbReference type="ProteomicsDB" id="244580"/>
<dbReference type="EnsemblPlants" id="AT3G53510.1">
    <property type="protein sequence ID" value="AT3G53510.1"/>
    <property type="gene ID" value="AT3G53510"/>
</dbReference>
<dbReference type="GeneID" id="824519"/>
<dbReference type="Gramene" id="AT3G53510.1">
    <property type="protein sequence ID" value="AT3G53510.1"/>
    <property type="gene ID" value="AT3G53510"/>
</dbReference>
<dbReference type="KEGG" id="ath:AT3G53510"/>
<dbReference type="Araport" id="AT3G53510"/>
<dbReference type="TAIR" id="AT3G53510">
    <property type="gene designation" value="ABCG20"/>
</dbReference>
<dbReference type="eggNOG" id="KOG0061">
    <property type="taxonomic scope" value="Eukaryota"/>
</dbReference>
<dbReference type="HOGENOM" id="CLU_000604_57_8_1"/>
<dbReference type="InParanoid" id="Q9LFG8"/>
<dbReference type="OMA" id="HYCVQEK"/>
<dbReference type="PhylomeDB" id="Q9LFG8"/>
<dbReference type="PRO" id="PR:Q9LFG8"/>
<dbReference type="Proteomes" id="UP000006548">
    <property type="component" value="Chromosome 3"/>
</dbReference>
<dbReference type="ExpressionAtlas" id="Q9LFG8">
    <property type="expression patterns" value="baseline and differential"/>
</dbReference>
<dbReference type="GO" id="GO:0016020">
    <property type="term" value="C:membrane"/>
    <property type="evidence" value="ECO:0007669"/>
    <property type="project" value="UniProtKB-SubCell"/>
</dbReference>
<dbReference type="GO" id="GO:0140359">
    <property type="term" value="F:ABC-type transporter activity"/>
    <property type="evidence" value="ECO:0007669"/>
    <property type="project" value="InterPro"/>
</dbReference>
<dbReference type="GO" id="GO:0005524">
    <property type="term" value="F:ATP binding"/>
    <property type="evidence" value="ECO:0007669"/>
    <property type="project" value="UniProtKB-KW"/>
</dbReference>
<dbReference type="GO" id="GO:0016887">
    <property type="term" value="F:ATP hydrolysis activity"/>
    <property type="evidence" value="ECO:0007669"/>
    <property type="project" value="InterPro"/>
</dbReference>
<dbReference type="GO" id="GO:1903825">
    <property type="term" value="P:organic acid transmembrane transport"/>
    <property type="evidence" value="ECO:0000314"/>
    <property type="project" value="TAIR"/>
</dbReference>
<dbReference type="GO" id="GO:0010345">
    <property type="term" value="P:suberin biosynthetic process"/>
    <property type="evidence" value="ECO:0000316"/>
    <property type="project" value="TAIR"/>
</dbReference>
<dbReference type="FunFam" id="3.40.50.300:FF:000530">
    <property type="entry name" value="ABC transporter G family member 6"/>
    <property type="match status" value="1"/>
</dbReference>
<dbReference type="Gene3D" id="3.40.50.300">
    <property type="entry name" value="P-loop containing nucleotide triphosphate hydrolases"/>
    <property type="match status" value="1"/>
</dbReference>
<dbReference type="InterPro" id="IPR003593">
    <property type="entry name" value="AAA+_ATPase"/>
</dbReference>
<dbReference type="InterPro" id="IPR013525">
    <property type="entry name" value="ABC2_TM"/>
</dbReference>
<dbReference type="InterPro" id="IPR003439">
    <property type="entry name" value="ABC_transporter-like_ATP-bd"/>
</dbReference>
<dbReference type="InterPro" id="IPR017871">
    <property type="entry name" value="ABC_transporter-like_CS"/>
</dbReference>
<dbReference type="InterPro" id="IPR050352">
    <property type="entry name" value="ABCG_transporters"/>
</dbReference>
<dbReference type="InterPro" id="IPR027417">
    <property type="entry name" value="P-loop_NTPase"/>
</dbReference>
<dbReference type="PANTHER" id="PTHR48041:SF109">
    <property type="entry name" value="ABC TRANSPORTER G FAMILY MEMBER 20"/>
    <property type="match status" value="1"/>
</dbReference>
<dbReference type="PANTHER" id="PTHR48041">
    <property type="entry name" value="ABC TRANSPORTER G FAMILY MEMBER 28"/>
    <property type="match status" value="1"/>
</dbReference>
<dbReference type="Pfam" id="PF01061">
    <property type="entry name" value="ABC2_membrane"/>
    <property type="match status" value="1"/>
</dbReference>
<dbReference type="Pfam" id="PF00005">
    <property type="entry name" value="ABC_tran"/>
    <property type="match status" value="1"/>
</dbReference>
<dbReference type="SMART" id="SM00382">
    <property type="entry name" value="AAA"/>
    <property type="match status" value="1"/>
</dbReference>
<dbReference type="SUPFAM" id="SSF52540">
    <property type="entry name" value="P-loop containing nucleoside triphosphate hydrolases"/>
    <property type="match status" value="1"/>
</dbReference>
<dbReference type="PROSITE" id="PS00211">
    <property type="entry name" value="ABC_TRANSPORTER_1"/>
    <property type="match status" value="1"/>
</dbReference>
<dbReference type="PROSITE" id="PS50893">
    <property type="entry name" value="ABC_TRANSPORTER_2"/>
    <property type="match status" value="1"/>
</dbReference>
<reference key="1">
    <citation type="journal article" date="2000" name="Nature">
        <title>Sequence and analysis of chromosome 3 of the plant Arabidopsis thaliana.</title>
        <authorList>
            <person name="Salanoubat M."/>
            <person name="Lemcke K."/>
            <person name="Rieger M."/>
            <person name="Ansorge W."/>
            <person name="Unseld M."/>
            <person name="Fartmann B."/>
            <person name="Valle G."/>
            <person name="Bloecker H."/>
            <person name="Perez-Alonso M."/>
            <person name="Obermaier B."/>
            <person name="Delseny M."/>
            <person name="Boutry M."/>
            <person name="Grivell L.A."/>
            <person name="Mache R."/>
            <person name="Puigdomenech P."/>
            <person name="De Simone V."/>
            <person name="Choisne N."/>
            <person name="Artiguenave F."/>
            <person name="Robert C."/>
            <person name="Brottier P."/>
            <person name="Wincker P."/>
            <person name="Cattolico L."/>
            <person name="Weissenbach J."/>
            <person name="Saurin W."/>
            <person name="Quetier F."/>
            <person name="Schaefer M."/>
            <person name="Mueller-Auer S."/>
            <person name="Gabel C."/>
            <person name="Fuchs M."/>
            <person name="Benes V."/>
            <person name="Wurmbach E."/>
            <person name="Drzonek H."/>
            <person name="Erfle H."/>
            <person name="Jordan N."/>
            <person name="Bangert S."/>
            <person name="Wiedelmann R."/>
            <person name="Kranz H."/>
            <person name="Voss H."/>
            <person name="Holland R."/>
            <person name="Brandt P."/>
            <person name="Nyakatura G."/>
            <person name="Vezzi A."/>
            <person name="D'Angelo M."/>
            <person name="Pallavicini A."/>
            <person name="Toppo S."/>
            <person name="Simionati B."/>
            <person name="Conrad A."/>
            <person name="Hornischer K."/>
            <person name="Kauer G."/>
            <person name="Loehnert T.-H."/>
            <person name="Nordsiek G."/>
            <person name="Reichelt J."/>
            <person name="Scharfe M."/>
            <person name="Schoen O."/>
            <person name="Bargues M."/>
            <person name="Terol J."/>
            <person name="Climent J."/>
            <person name="Navarro P."/>
            <person name="Collado C."/>
            <person name="Perez-Perez A."/>
            <person name="Ottenwaelder B."/>
            <person name="Duchemin D."/>
            <person name="Cooke R."/>
            <person name="Laudie M."/>
            <person name="Berger-Llauro C."/>
            <person name="Purnelle B."/>
            <person name="Masuy D."/>
            <person name="de Haan M."/>
            <person name="Maarse A.C."/>
            <person name="Alcaraz J.-P."/>
            <person name="Cottet A."/>
            <person name="Casacuberta E."/>
            <person name="Monfort A."/>
            <person name="Argiriou A."/>
            <person name="Flores M."/>
            <person name="Liguori R."/>
            <person name="Vitale D."/>
            <person name="Mannhaupt G."/>
            <person name="Haase D."/>
            <person name="Schoof H."/>
            <person name="Rudd S."/>
            <person name="Zaccaria P."/>
            <person name="Mewes H.-W."/>
            <person name="Mayer K.F.X."/>
            <person name="Kaul S."/>
            <person name="Town C.D."/>
            <person name="Koo H.L."/>
            <person name="Tallon L.J."/>
            <person name="Jenkins J."/>
            <person name="Rooney T."/>
            <person name="Rizzo M."/>
            <person name="Walts A."/>
            <person name="Utterback T."/>
            <person name="Fujii C.Y."/>
            <person name="Shea T.P."/>
            <person name="Creasy T.H."/>
            <person name="Haas B."/>
            <person name="Maiti R."/>
            <person name="Wu D."/>
            <person name="Peterson J."/>
            <person name="Van Aken S."/>
            <person name="Pai G."/>
            <person name="Militscher J."/>
            <person name="Sellers P."/>
            <person name="Gill J.E."/>
            <person name="Feldblyum T.V."/>
            <person name="Preuss D."/>
            <person name="Lin X."/>
            <person name="Nierman W.C."/>
            <person name="Salzberg S.L."/>
            <person name="White O."/>
            <person name="Venter J.C."/>
            <person name="Fraser C.M."/>
            <person name="Kaneko T."/>
            <person name="Nakamura Y."/>
            <person name="Sato S."/>
            <person name="Kato T."/>
            <person name="Asamizu E."/>
            <person name="Sasamoto S."/>
            <person name="Kimura T."/>
            <person name="Idesawa K."/>
            <person name="Kawashima K."/>
            <person name="Kishida Y."/>
            <person name="Kiyokawa C."/>
            <person name="Kohara M."/>
            <person name="Matsumoto M."/>
            <person name="Matsuno A."/>
            <person name="Muraki A."/>
            <person name="Nakayama S."/>
            <person name="Nakazaki N."/>
            <person name="Shinpo S."/>
            <person name="Takeuchi C."/>
            <person name="Wada T."/>
            <person name="Watanabe A."/>
            <person name="Yamada M."/>
            <person name="Yasuda M."/>
            <person name="Tabata S."/>
        </authorList>
    </citation>
    <scope>NUCLEOTIDE SEQUENCE [LARGE SCALE GENOMIC DNA]</scope>
    <source>
        <strain>cv. Columbia</strain>
    </source>
</reference>
<reference key="2">
    <citation type="journal article" date="2017" name="Plant J.">
        <title>Araport11: a complete reannotation of the Arabidopsis thaliana reference genome.</title>
        <authorList>
            <person name="Cheng C.Y."/>
            <person name="Krishnakumar V."/>
            <person name="Chan A.P."/>
            <person name="Thibaud-Nissen F."/>
            <person name="Schobel S."/>
            <person name="Town C.D."/>
        </authorList>
    </citation>
    <scope>GENOME REANNOTATION</scope>
    <source>
        <strain>cv. Columbia</strain>
    </source>
</reference>
<reference key="3">
    <citation type="submission" date="2006-07" db="EMBL/GenBank/DDBJ databases">
        <title>Large-scale analysis of RIKEN Arabidopsis full-length (RAFL) cDNAs.</title>
        <authorList>
            <person name="Totoki Y."/>
            <person name="Seki M."/>
            <person name="Ishida J."/>
            <person name="Nakajima M."/>
            <person name="Enju A."/>
            <person name="Kamiya A."/>
            <person name="Narusaka M."/>
            <person name="Shin-i T."/>
            <person name="Nakagawa M."/>
            <person name="Sakamoto N."/>
            <person name="Oishi K."/>
            <person name="Kohara Y."/>
            <person name="Kobayashi M."/>
            <person name="Toyoda A."/>
            <person name="Sakaki Y."/>
            <person name="Sakurai T."/>
            <person name="Iida K."/>
            <person name="Akiyama K."/>
            <person name="Satou M."/>
            <person name="Toyoda T."/>
            <person name="Konagaya A."/>
            <person name="Carninci P."/>
            <person name="Kawai J."/>
            <person name="Hayashizaki Y."/>
            <person name="Shinozaki K."/>
        </authorList>
    </citation>
    <scope>NUCLEOTIDE SEQUENCE [LARGE SCALE MRNA]</scope>
    <source>
        <strain>cv. Columbia</strain>
    </source>
</reference>
<reference key="4">
    <citation type="journal article" date="2001" name="J. Biol. Chem.">
        <title>The Arabidopsis thaliana ABC protein superfamily, a complete inventory.</title>
        <authorList>
            <person name="Sanchez-Fernandez R."/>
            <person name="Davies T.G."/>
            <person name="Coleman J.O."/>
            <person name="Rea P.A."/>
        </authorList>
    </citation>
    <scope>GENE FAMILY</scope>
    <scope>NOMENCLATURE</scope>
</reference>
<reference key="5">
    <citation type="journal article" date="2008" name="Trends Plant Sci.">
        <title>Plant ABC proteins - a unified nomenclature and updated inventory.</title>
        <authorList>
            <person name="Verrier P.J."/>
            <person name="Bird D."/>
            <person name="Burla B."/>
            <person name="Dassa E."/>
            <person name="Forestier C."/>
            <person name="Geisler M."/>
            <person name="Klein M."/>
            <person name="Kolukisaoglu H.U."/>
            <person name="Lee Y."/>
            <person name="Martinoia E."/>
            <person name="Murphy A."/>
            <person name="Rea P.A."/>
            <person name="Samuels L."/>
            <person name="Schulz B."/>
            <person name="Spalding E.J."/>
            <person name="Yazaki K."/>
            <person name="Theodoulou F.L."/>
        </authorList>
    </citation>
    <scope>GENE FAMILY</scope>
    <scope>NOMENCLATURE</scope>
</reference>
<accession>Q9LFG8</accession>
<evidence type="ECO:0000250" key="1"/>
<evidence type="ECO:0000255" key="2"/>
<evidence type="ECO:0000255" key="3">
    <source>
        <dbReference type="PROSITE-ProRule" id="PRU00434"/>
    </source>
</evidence>
<evidence type="ECO:0000305" key="4"/>
<keyword id="KW-0067">ATP-binding</keyword>
<keyword id="KW-0472">Membrane</keyword>
<keyword id="KW-0547">Nucleotide-binding</keyword>
<keyword id="KW-1185">Reference proteome</keyword>
<keyword id="KW-0812">Transmembrane</keyword>
<keyword id="KW-1133">Transmembrane helix</keyword>
<keyword id="KW-0813">Transport</keyword>
<gene>
    <name type="primary">ABCG20</name>
    <name type="synonym">WBC20</name>
    <name type="ordered locus">At3g53510</name>
    <name type="ORF">F4P12.210</name>
</gene>
<name>AB20G_ARATH</name>
<comment type="subcellular location">
    <subcellularLocation>
        <location evidence="1">Membrane</location>
        <topology evidence="1">Multi-pass membrane protein</topology>
    </subcellularLocation>
</comment>
<comment type="similarity">
    <text evidence="4">Belongs to the ABC transporter superfamily. ABCG family. Eye pigment precursor importer (TC 3.A.1.204) subfamily.</text>
</comment>
<comment type="sequence caution" evidence="4">
    <conflict type="frameshift">
        <sequence resource="EMBL" id="AK228064"/>
    </conflict>
</comment>
<protein>
    <recommendedName>
        <fullName>ABC transporter G family member 20</fullName>
        <shortName>ABC transporter ABCG.20</shortName>
        <shortName>AtABCG20</shortName>
    </recommendedName>
    <alternativeName>
        <fullName>Probable white-brown complex homolog protein 20</fullName>
        <shortName>AtWBC20</shortName>
    </alternativeName>
</protein>
<feature type="chain" id="PRO_0000240692" description="ABC transporter G family member 20">
    <location>
        <begin position="1"/>
        <end position="739"/>
    </location>
</feature>
<feature type="transmembrane region" description="Helical" evidence="2">
    <location>
        <begin position="452"/>
        <end position="472"/>
    </location>
</feature>
<feature type="transmembrane region" description="Helical" evidence="2">
    <location>
        <begin position="487"/>
        <end position="507"/>
    </location>
</feature>
<feature type="transmembrane region" description="Helical" evidence="2">
    <location>
        <begin position="528"/>
        <end position="548"/>
    </location>
</feature>
<feature type="transmembrane region" description="Helical" evidence="2">
    <location>
        <begin position="563"/>
        <end position="583"/>
    </location>
</feature>
<feature type="transmembrane region" description="Helical" evidence="2">
    <location>
        <begin position="593"/>
        <end position="613"/>
    </location>
</feature>
<feature type="transmembrane region" description="Helical" evidence="2">
    <location>
        <begin position="712"/>
        <end position="732"/>
    </location>
</feature>
<feature type="domain" description="ABC transporter" evidence="3">
    <location>
        <begin position="88"/>
        <end position="351"/>
    </location>
</feature>
<feature type="domain" description="ABC transmembrane type-2">
    <location>
        <begin position="433"/>
        <end position="643"/>
    </location>
</feature>
<feature type="binding site" evidence="3">
    <location>
        <begin position="144"/>
        <end position="151"/>
    </location>
    <ligand>
        <name>ATP</name>
        <dbReference type="ChEBI" id="CHEBI:30616"/>
    </ligand>
</feature>
<organism>
    <name type="scientific">Arabidopsis thaliana</name>
    <name type="common">Mouse-ear cress</name>
    <dbReference type="NCBI Taxonomy" id="3702"/>
    <lineage>
        <taxon>Eukaryota</taxon>
        <taxon>Viridiplantae</taxon>
        <taxon>Streptophyta</taxon>
        <taxon>Embryophyta</taxon>
        <taxon>Tracheophyta</taxon>
        <taxon>Spermatophyta</taxon>
        <taxon>Magnoliopsida</taxon>
        <taxon>eudicotyledons</taxon>
        <taxon>Gunneridae</taxon>
        <taxon>Pentapetalae</taxon>
        <taxon>rosids</taxon>
        <taxon>malvids</taxon>
        <taxon>Brassicales</taxon>
        <taxon>Brassicaceae</taxon>
        <taxon>Camelineae</taxon>
        <taxon>Arabidopsis</taxon>
    </lineage>
</organism>
<proteinExistence type="evidence at transcript level"/>